<proteinExistence type="inferred from homology"/>
<dbReference type="EC" id="2.7.3.3"/>
<dbReference type="EMBL" id="Z75714">
    <property type="protein sequence ID" value="CAB00062.1"/>
    <property type="molecule type" value="Genomic_DNA"/>
</dbReference>
<dbReference type="PIR" id="T27569">
    <property type="entry name" value="T27569"/>
</dbReference>
<dbReference type="RefSeq" id="NP_492714.1">
    <property type="nucleotide sequence ID" value="NM_060313.11"/>
</dbReference>
<dbReference type="SMR" id="Q27535"/>
<dbReference type="BioGRID" id="38324">
    <property type="interactions" value="10"/>
</dbReference>
<dbReference type="DIP" id="DIP-25633N"/>
<dbReference type="FunCoup" id="Q27535">
    <property type="interactions" value="59"/>
</dbReference>
<dbReference type="IntAct" id="Q27535">
    <property type="interactions" value="1"/>
</dbReference>
<dbReference type="STRING" id="6239.ZC434.8.2"/>
<dbReference type="iPTMnet" id="Q27535"/>
<dbReference type="PaxDb" id="6239-ZC434.8.1"/>
<dbReference type="PeptideAtlas" id="Q27535"/>
<dbReference type="EnsemblMetazoa" id="ZC434.8.1">
    <property type="protein sequence ID" value="ZC434.8.1"/>
    <property type="gene ID" value="WBGene00013894"/>
</dbReference>
<dbReference type="GeneID" id="172907"/>
<dbReference type="KEGG" id="cel:CELE_ZC434.8"/>
<dbReference type="UCSC" id="ZC434.8.1">
    <property type="organism name" value="c. elegans"/>
</dbReference>
<dbReference type="AGR" id="WB:WBGene00013894"/>
<dbReference type="CTD" id="172907"/>
<dbReference type="WormBase" id="ZC434.8">
    <property type="protein sequence ID" value="CE06583"/>
    <property type="gene ID" value="WBGene00013894"/>
</dbReference>
<dbReference type="eggNOG" id="KOG3581">
    <property type="taxonomic scope" value="Eukaryota"/>
</dbReference>
<dbReference type="GeneTree" id="ENSGT00950000182772"/>
<dbReference type="HOGENOM" id="CLU_019868_0_0_1"/>
<dbReference type="InParanoid" id="Q27535"/>
<dbReference type="OMA" id="ISNQRRM"/>
<dbReference type="OrthoDB" id="430219at2759"/>
<dbReference type="PhylomeDB" id="Q27535"/>
<dbReference type="BRENDA" id="2.7.3.3">
    <property type="organism ID" value="1045"/>
</dbReference>
<dbReference type="PRO" id="PR:Q27535"/>
<dbReference type="Proteomes" id="UP000001940">
    <property type="component" value="Chromosome I"/>
</dbReference>
<dbReference type="Bgee" id="WBGene00013894">
    <property type="expression patterns" value="Expressed in adult organism and 4 other cell types or tissues"/>
</dbReference>
<dbReference type="GO" id="GO:0005615">
    <property type="term" value="C:extracellular space"/>
    <property type="evidence" value="ECO:0000318"/>
    <property type="project" value="GO_Central"/>
</dbReference>
<dbReference type="GO" id="GO:0004054">
    <property type="term" value="F:arginine kinase activity"/>
    <property type="evidence" value="ECO:0007669"/>
    <property type="project" value="UniProtKB-EC"/>
</dbReference>
<dbReference type="GO" id="GO:0005524">
    <property type="term" value="F:ATP binding"/>
    <property type="evidence" value="ECO:0007669"/>
    <property type="project" value="UniProtKB-KW"/>
</dbReference>
<dbReference type="GO" id="GO:0004111">
    <property type="term" value="F:creatine kinase activity"/>
    <property type="evidence" value="ECO:0007669"/>
    <property type="project" value="InterPro"/>
</dbReference>
<dbReference type="GO" id="GO:0016301">
    <property type="term" value="F:kinase activity"/>
    <property type="evidence" value="ECO:0000318"/>
    <property type="project" value="GO_Central"/>
</dbReference>
<dbReference type="GO" id="GO:0046314">
    <property type="term" value="P:phosphocreatine biosynthetic process"/>
    <property type="evidence" value="ECO:0007669"/>
    <property type="project" value="InterPro"/>
</dbReference>
<dbReference type="CDD" id="cd07932">
    <property type="entry name" value="arginine_kinase_like"/>
    <property type="match status" value="1"/>
</dbReference>
<dbReference type="FunFam" id="3.30.590.10:FF:000006">
    <property type="entry name" value="Arginine kinase 1"/>
    <property type="match status" value="1"/>
</dbReference>
<dbReference type="FunFam" id="1.10.135.10:FF:000003">
    <property type="entry name" value="Three-domain arginine kinase"/>
    <property type="match status" value="1"/>
</dbReference>
<dbReference type="Gene3D" id="1.10.135.10">
    <property type="entry name" value="ATP:guanido phosphotransferase, N-terminal domain"/>
    <property type="match status" value="1"/>
</dbReference>
<dbReference type="Gene3D" id="3.30.590.10">
    <property type="entry name" value="Glutamine synthetase/guanido kinase, catalytic domain"/>
    <property type="match status" value="1"/>
</dbReference>
<dbReference type="InterPro" id="IPR000749">
    <property type="entry name" value="ATP-guanido_PTrfase"/>
</dbReference>
<dbReference type="InterPro" id="IPR022415">
    <property type="entry name" value="ATP-guanido_PTrfase_AS"/>
</dbReference>
<dbReference type="InterPro" id="IPR022414">
    <property type="entry name" value="ATP-guanido_PTrfase_cat"/>
</dbReference>
<dbReference type="InterPro" id="IPR022413">
    <property type="entry name" value="ATP-guanido_PTrfase_N"/>
</dbReference>
<dbReference type="InterPro" id="IPR036802">
    <property type="entry name" value="ATP-guanido_PTrfase_N_sf"/>
</dbReference>
<dbReference type="InterPro" id="IPR014746">
    <property type="entry name" value="Gln_synth/guanido_kin_cat_dom"/>
</dbReference>
<dbReference type="PANTHER" id="PTHR11547:SF61">
    <property type="entry name" value="ARGININE KINASE ZC434.8-RELATED"/>
    <property type="match status" value="1"/>
</dbReference>
<dbReference type="PANTHER" id="PTHR11547">
    <property type="entry name" value="ARGININE OR CREATINE KINASE"/>
    <property type="match status" value="1"/>
</dbReference>
<dbReference type="Pfam" id="PF00217">
    <property type="entry name" value="ATP-gua_Ptrans"/>
    <property type="match status" value="1"/>
</dbReference>
<dbReference type="Pfam" id="PF02807">
    <property type="entry name" value="ATP-gua_PtransN"/>
    <property type="match status" value="1"/>
</dbReference>
<dbReference type="SUPFAM" id="SSF55931">
    <property type="entry name" value="Glutamine synthetase/guanido kinase"/>
    <property type="match status" value="1"/>
</dbReference>
<dbReference type="SUPFAM" id="SSF48034">
    <property type="entry name" value="Guanido kinase N-terminal domain"/>
    <property type="match status" value="1"/>
</dbReference>
<dbReference type="PROSITE" id="PS00112">
    <property type="entry name" value="PHOSPHAGEN_KINASE"/>
    <property type="match status" value="1"/>
</dbReference>
<dbReference type="PROSITE" id="PS51510">
    <property type="entry name" value="PHOSPHAGEN_KINASE_C"/>
    <property type="match status" value="1"/>
</dbReference>
<dbReference type="PROSITE" id="PS51509">
    <property type="entry name" value="PHOSPHAGEN_KINASE_N"/>
    <property type="match status" value="1"/>
</dbReference>
<sequence>MTATPEVQKSIEEVYTKLQGASDCSSLLKKHLTKDVVAKNKSKKTRLGATLLDVIQSGGENLDSGVGIYAPDAESYTLFADLFNPVIEEYHNGFKATDTQPAMDLGEKNVGELADLDPEGKFIVSTRIRCGRSLQGYPFNPCLSETNYKMMETRMKEIFNSITDPELKGTYYPLTGMDEETKKKLIADHFLFKEGDRFLKAANANRYWPNGRGIFHNEKKTFLVWVNEEDHLRIISMQNGGNVGEVLARLIKGLNLVAAKAPFARHPRLGWLTFCPTNLGTTVRASVHIKLPKISAKDDFKKICSDMKLQIRGIHGEHSESKEGIYDISNKQRLGLTEYQAVRQMYDGLKKLIELEKAAA</sequence>
<gene>
    <name type="ORF">ZC434.8</name>
</gene>
<comment type="catalytic activity">
    <reaction>
        <text>L-arginine + ATP = N(omega)-phospho-L-arginine + ADP + H(+)</text>
        <dbReference type="Rhea" id="RHEA:22940"/>
        <dbReference type="ChEBI" id="CHEBI:15378"/>
        <dbReference type="ChEBI" id="CHEBI:30616"/>
        <dbReference type="ChEBI" id="CHEBI:32682"/>
        <dbReference type="ChEBI" id="CHEBI:58477"/>
        <dbReference type="ChEBI" id="CHEBI:456216"/>
        <dbReference type="EC" id="2.7.3.3"/>
    </reaction>
</comment>
<comment type="similarity">
    <text evidence="2 3">Belongs to the ATP:guanido phosphotransferase family.</text>
</comment>
<protein>
    <recommendedName>
        <fullName>Probable arginine kinase ZC434.8</fullName>
        <shortName>AK</shortName>
        <ecNumber>2.7.3.3</ecNumber>
    </recommendedName>
</protein>
<accession>Q27535</accession>
<reference key="1">
    <citation type="journal article" date="1998" name="Science">
        <title>Genome sequence of the nematode C. elegans: a platform for investigating biology.</title>
        <authorList>
            <consortium name="The C. elegans sequencing consortium"/>
        </authorList>
    </citation>
    <scope>NUCLEOTIDE SEQUENCE [LARGE SCALE GENOMIC DNA]</scope>
    <source>
        <strain>Bristol N2</strain>
    </source>
</reference>
<name>KARG2_CAEEL</name>
<keyword id="KW-0067">ATP-binding</keyword>
<keyword id="KW-0418">Kinase</keyword>
<keyword id="KW-0547">Nucleotide-binding</keyword>
<keyword id="KW-1185">Reference proteome</keyword>
<keyword id="KW-0808">Transferase</keyword>
<organism>
    <name type="scientific">Caenorhabditis elegans</name>
    <dbReference type="NCBI Taxonomy" id="6239"/>
    <lineage>
        <taxon>Eukaryota</taxon>
        <taxon>Metazoa</taxon>
        <taxon>Ecdysozoa</taxon>
        <taxon>Nematoda</taxon>
        <taxon>Chromadorea</taxon>
        <taxon>Rhabditida</taxon>
        <taxon>Rhabditina</taxon>
        <taxon>Rhabditomorpha</taxon>
        <taxon>Rhabditoidea</taxon>
        <taxon>Rhabditidae</taxon>
        <taxon>Peloderinae</taxon>
        <taxon>Caenorhabditis</taxon>
    </lineage>
</organism>
<feature type="chain" id="PRO_0000211989" description="Probable arginine kinase ZC434.8">
    <location>
        <begin position="1"/>
        <end position="360"/>
    </location>
</feature>
<feature type="domain" description="Phosphagen kinase N-terminal" evidence="2">
    <location>
        <begin position="10"/>
        <end position="92"/>
    </location>
</feature>
<feature type="domain" description="Phosphagen kinase C-terminal" evidence="3">
    <location>
        <begin position="122"/>
        <end position="359"/>
    </location>
</feature>
<feature type="binding site" evidence="1">
    <location>
        <begin position="65"/>
        <end position="69"/>
    </location>
    <ligand>
        <name>substrate</name>
    </ligand>
</feature>
<feature type="binding site" evidence="3">
    <location>
        <begin position="125"/>
        <end position="129"/>
    </location>
    <ligand>
        <name>ATP</name>
        <dbReference type="ChEBI" id="CHEBI:30616"/>
    </ligand>
</feature>
<feature type="binding site" evidence="3">
    <location>
        <position position="189"/>
    </location>
    <ligand>
        <name>ATP</name>
        <dbReference type="ChEBI" id="CHEBI:30616"/>
    </ligand>
</feature>
<feature type="binding site" evidence="1">
    <location>
        <position position="229"/>
    </location>
    <ligand>
        <name>substrate</name>
    </ligand>
</feature>
<feature type="binding site" evidence="3">
    <location>
        <position position="233"/>
    </location>
    <ligand>
        <name>ATP</name>
        <dbReference type="ChEBI" id="CHEBI:30616"/>
    </ligand>
</feature>
<feature type="binding site" evidence="1">
    <location>
        <position position="275"/>
    </location>
    <ligand>
        <name>substrate</name>
    </ligand>
</feature>
<feature type="binding site" evidence="3">
    <location>
        <begin position="284"/>
        <end position="288"/>
    </location>
    <ligand>
        <name>ATP</name>
        <dbReference type="ChEBI" id="CHEBI:30616"/>
    </ligand>
</feature>
<feature type="binding site" evidence="3">
    <location>
        <begin position="312"/>
        <end position="317"/>
    </location>
    <ligand>
        <name>ATP</name>
        <dbReference type="ChEBI" id="CHEBI:30616"/>
    </ligand>
</feature>
<feature type="binding site" evidence="1">
    <location>
        <position position="317"/>
    </location>
    <ligand>
        <name>substrate</name>
    </ligand>
</feature>
<feature type="binding site" evidence="3">
    <location>
        <position position="327"/>
    </location>
    <ligand>
        <name>ATP</name>
        <dbReference type="ChEBI" id="CHEBI:30616"/>
    </ligand>
</feature>
<evidence type="ECO:0000250" key="1"/>
<evidence type="ECO:0000255" key="2">
    <source>
        <dbReference type="PROSITE-ProRule" id="PRU00842"/>
    </source>
</evidence>
<evidence type="ECO:0000255" key="3">
    <source>
        <dbReference type="PROSITE-ProRule" id="PRU00843"/>
    </source>
</evidence>